<accession>B8CNE2</accession>
<gene>
    <name evidence="1" type="primary">rpsQ</name>
    <name type="ordered locus">swp_2020</name>
</gene>
<organism>
    <name type="scientific">Shewanella piezotolerans (strain WP3 / JCM 13877)</name>
    <dbReference type="NCBI Taxonomy" id="225849"/>
    <lineage>
        <taxon>Bacteria</taxon>
        <taxon>Pseudomonadati</taxon>
        <taxon>Pseudomonadota</taxon>
        <taxon>Gammaproteobacteria</taxon>
        <taxon>Alteromonadales</taxon>
        <taxon>Shewanellaceae</taxon>
        <taxon>Shewanella</taxon>
    </lineage>
</organism>
<dbReference type="EMBL" id="CP000472">
    <property type="protein sequence ID" value="ACJ28776.1"/>
    <property type="molecule type" value="Genomic_DNA"/>
</dbReference>
<dbReference type="RefSeq" id="WP_020912145.1">
    <property type="nucleotide sequence ID" value="NC_011566.1"/>
</dbReference>
<dbReference type="SMR" id="B8CNE2"/>
<dbReference type="STRING" id="225849.swp_2020"/>
<dbReference type="KEGG" id="swp:swp_2020"/>
<dbReference type="eggNOG" id="COG0186">
    <property type="taxonomic scope" value="Bacteria"/>
</dbReference>
<dbReference type="HOGENOM" id="CLU_073626_1_1_6"/>
<dbReference type="OrthoDB" id="9811714at2"/>
<dbReference type="Proteomes" id="UP000000753">
    <property type="component" value="Chromosome"/>
</dbReference>
<dbReference type="GO" id="GO:0022627">
    <property type="term" value="C:cytosolic small ribosomal subunit"/>
    <property type="evidence" value="ECO:0007669"/>
    <property type="project" value="TreeGrafter"/>
</dbReference>
<dbReference type="GO" id="GO:0019843">
    <property type="term" value="F:rRNA binding"/>
    <property type="evidence" value="ECO:0007669"/>
    <property type="project" value="UniProtKB-UniRule"/>
</dbReference>
<dbReference type="GO" id="GO:0003735">
    <property type="term" value="F:structural constituent of ribosome"/>
    <property type="evidence" value="ECO:0007669"/>
    <property type="project" value="InterPro"/>
</dbReference>
<dbReference type="GO" id="GO:0006412">
    <property type="term" value="P:translation"/>
    <property type="evidence" value="ECO:0007669"/>
    <property type="project" value="UniProtKB-UniRule"/>
</dbReference>
<dbReference type="CDD" id="cd00364">
    <property type="entry name" value="Ribosomal_uS17"/>
    <property type="match status" value="1"/>
</dbReference>
<dbReference type="FunFam" id="2.40.50.140:FF:000014">
    <property type="entry name" value="30S ribosomal protein S17"/>
    <property type="match status" value="1"/>
</dbReference>
<dbReference type="Gene3D" id="2.40.50.140">
    <property type="entry name" value="Nucleic acid-binding proteins"/>
    <property type="match status" value="1"/>
</dbReference>
<dbReference type="HAMAP" id="MF_01345_B">
    <property type="entry name" value="Ribosomal_uS17_B"/>
    <property type="match status" value="1"/>
</dbReference>
<dbReference type="InterPro" id="IPR012340">
    <property type="entry name" value="NA-bd_OB-fold"/>
</dbReference>
<dbReference type="InterPro" id="IPR000266">
    <property type="entry name" value="Ribosomal_uS17"/>
</dbReference>
<dbReference type="InterPro" id="IPR019984">
    <property type="entry name" value="Ribosomal_uS17_bact/chlr"/>
</dbReference>
<dbReference type="InterPro" id="IPR019979">
    <property type="entry name" value="Ribosomal_uS17_CS"/>
</dbReference>
<dbReference type="NCBIfam" id="NF004123">
    <property type="entry name" value="PRK05610.1"/>
    <property type="match status" value="1"/>
</dbReference>
<dbReference type="NCBIfam" id="TIGR03635">
    <property type="entry name" value="uS17_bact"/>
    <property type="match status" value="1"/>
</dbReference>
<dbReference type="PANTHER" id="PTHR10744">
    <property type="entry name" value="40S RIBOSOMAL PROTEIN S11 FAMILY MEMBER"/>
    <property type="match status" value="1"/>
</dbReference>
<dbReference type="PANTHER" id="PTHR10744:SF1">
    <property type="entry name" value="SMALL RIBOSOMAL SUBUNIT PROTEIN US17M"/>
    <property type="match status" value="1"/>
</dbReference>
<dbReference type="Pfam" id="PF00366">
    <property type="entry name" value="Ribosomal_S17"/>
    <property type="match status" value="1"/>
</dbReference>
<dbReference type="PRINTS" id="PR00973">
    <property type="entry name" value="RIBOSOMALS17"/>
</dbReference>
<dbReference type="SUPFAM" id="SSF50249">
    <property type="entry name" value="Nucleic acid-binding proteins"/>
    <property type="match status" value="1"/>
</dbReference>
<dbReference type="PROSITE" id="PS00056">
    <property type="entry name" value="RIBOSOMAL_S17"/>
    <property type="match status" value="1"/>
</dbReference>
<comment type="function">
    <text evidence="1">One of the primary rRNA binding proteins, it binds specifically to the 5'-end of 16S ribosomal RNA.</text>
</comment>
<comment type="subunit">
    <text evidence="1">Part of the 30S ribosomal subunit.</text>
</comment>
<comment type="similarity">
    <text evidence="1">Belongs to the universal ribosomal protein uS17 family.</text>
</comment>
<sequence length="82" mass="9349">MSDNIRTLQGRVLSNKMDKSITVAIERKVKHPLYGKFLKRTTKIHAHDEQNQCNAGDVVTIRECRPLSKTKSWTLVEVVSKA</sequence>
<feature type="chain" id="PRO_1000143302" description="Small ribosomal subunit protein uS17">
    <location>
        <begin position="1"/>
        <end position="82"/>
    </location>
</feature>
<reference key="1">
    <citation type="journal article" date="2008" name="PLoS ONE">
        <title>Environmental adaptation: genomic analysis of the piezotolerant and psychrotolerant deep-sea iron reducing bacterium Shewanella piezotolerans WP3.</title>
        <authorList>
            <person name="Wang F."/>
            <person name="Wang J."/>
            <person name="Jian H."/>
            <person name="Zhang B."/>
            <person name="Li S."/>
            <person name="Wang F."/>
            <person name="Zeng X."/>
            <person name="Gao L."/>
            <person name="Bartlett D.H."/>
            <person name="Yu J."/>
            <person name="Hu S."/>
            <person name="Xiao X."/>
        </authorList>
    </citation>
    <scope>NUCLEOTIDE SEQUENCE [LARGE SCALE GENOMIC DNA]</scope>
    <source>
        <strain>WP3 / JCM 13877</strain>
    </source>
</reference>
<name>RS17_SHEPW</name>
<evidence type="ECO:0000255" key="1">
    <source>
        <dbReference type="HAMAP-Rule" id="MF_01345"/>
    </source>
</evidence>
<evidence type="ECO:0000305" key="2"/>
<keyword id="KW-0687">Ribonucleoprotein</keyword>
<keyword id="KW-0689">Ribosomal protein</keyword>
<keyword id="KW-0694">RNA-binding</keyword>
<keyword id="KW-0699">rRNA-binding</keyword>
<proteinExistence type="inferred from homology"/>
<protein>
    <recommendedName>
        <fullName evidence="1">Small ribosomal subunit protein uS17</fullName>
    </recommendedName>
    <alternativeName>
        <fullName evidence="2">30S ribosomal protein S17</fullName>
    </alternativeName>
</protein>